<name>IF4E_XENLA</name>
<feature type="chain" id="PRO_0000193640" description="Eukaryotic translation initiation factor 4E">
    <location>
        <begin position="1"/>
        <end position="213"/>
    </location>
</feature>
<feature type="region of interest" description="Disordered" evidence="3">
    <location>
        <begin position="1"/>
        <end position="27"/>
    </location>
</feature>
<feature type="binding site" evidence="1">
    <location>
        <begin position="52"/>
        <end position="53"/>
    </location>
    <ligand>
        <name>mRNA</name>
        <dbReference type="ChEBI" id="CHEBI:33699"/>
    </ligand>
    <ligandPart>
        <name>N(7)-methylguanosine 5'-triphosphate group</name>
        <dbReference type="ChEBI" id="CHEBI:74429"/>
        <note>m7GTP residue in mRNA cap</note>
    </ligandPart>
</feature>
<feature type="binding site" evidence="1">
    <location>
        <begin position="98"/>
        <end position="99"/>
    </location>
    <ligand>
        <name>mRNA</name>
        <dbReference type="ChEBI" id="CHEBI:33699"/>
    </ligand>
    <ligandPart>
        <name>N(7)-methylguanosine 5'-triphosphate group</name>
        <dbReference type="ChEBI" id="CHEBI:74429"/>
        <note>m7GTP residue in mRNA cap</note>
    </ligandPart>
</feature>
<feature type="binding site" evidence="1">
    <location>
        <begin position="153"/>
        <end position="158"/>
    </location>
    <ligand>
        <name>mRNA</name>
        <dbReference type="ChEBI" id="CHEBI:33699"/>
    </ligand>
    <ligandPart>
        <name>N(7)-methylguanosine 5'-triphosphate group</name>
        <dbReference type="ChEBI" id="CHEBI:74429"/>
        <note>m7GTP residue in mRNA cap</note>
    </ligandPart>
</feature>
<feature type="binding site" evidence="1">
    <location>
        <begin position="201"/>
        <end position="203"/>
    </location>
    <ligand>
        <name>mRNA</name>
        <dbReference type="ChEBI" id="CHEBI:33699"/>
    </ligand>
    <ligandPart>
        <name>N(7)-methylguanosine 5'-triphosphate group</name>
        <dbReference type="ChEBI" id="CHEBI:74429"/>
        <note>m7GTP residue in mRNA cap</note>
    </ligandPart>
</feature>
<feature type="mutagenesis site" description="Does not affect ability to restore translation to an EIF4E-dependent in vitro translation system. Does not affect efficient EIF4E-mediated promotion of EIF4G cleavage by L-protease." evidence="5">
    <original>S</original>
    <variation>A</variation>
    <variation>D</variation>
    <location>
        <position position="205"/>
    </location>
</feature>
<comment type="function">
    <text evidence="1 2 4">Recognizes and binds the 7-methylguanosine (m7G)-containing mRNA cap during an early step in the initiation of protein synthesis and facilitates ribosome binding by inducing the unwinding of the mRNAs secondary structures (PubMed:10635326). In addition to its role in translation initiation, also acts as a regulator of translation and stability in the cytoplasm (By similarity). Maternal RNA in oocytes remain in a dormant state as tacc3/maskin outcompetes eif4g to bind eif4e, thereby preventing translation (PubMed:10635326). During oocyte maturation this complex dissolves and eif4g binds eif4e to allow translation of maternal RNAs (PubMed:10635326). Also promotes export of a subset of mRNAs from the nucleus to the cytoplasm (By similarity).</text>
</comment>
<comment type="subunit">
    <text evidence="1 4">eIF4F is a multi-subunit complex, the composition of which varies with external and internal environmental conditions. It is composed of at least eif4a, eif4e and eif4g. eif4e is also known to interact with other partners (By similarity). tacc3/maskin competes with eif4g for binding to eif4e (PubMed:10635326).</text>
</comment>
<comment type="interaction">
    <interactant intactId="EBI-65739">
        <id>P48597</id>
    </interactant>
    <interactant intactId="EBI-65726">
        <id>Q9PTG8</id>
        <label>tacc3</label>
    </interactant>
    <organismsDiffer>false</organismsDiffer>
    <experiments>3</experiments>
</comment>
<comment type="subcellular location">
    <subcellularLocation>
        <location evidence="4">Cytoplasm</location>
    </subcellularLocation>
    <subcellularLocation>
        <location evidence="1">Nucleus</location>
    </subcellularLocation>
    <text evidence="4">Cytoplasmic when interacting with tacc3/maskin.</text>
</comment>
<comment type="developmental stage">
    <text evidence="4 6">Expressed both maternally and zygotically.</text>
</comment>
<comment type="similarity">
    <text evidence="7">Belongs to the eukaryotic initiation factor 4E family.</text>
</comment>
<sequence>MAAVEPENTNPQSTEEEKETGQEIVSPDQYIKHPLQNRWALWFFKNDKSKTWQANLRLISKFDTVEDFWALYNHIQLSSNLMSGCDYSLFKDGIEPMWEDEKNKRGGRWLITLNKQQRRNDLDRFWLETLMCLIGESFDEHSDDVCGAVVNVRAKGDKIAIWTTEFENKDAVTHIGRVYKERLGLPAKVVIGYQSHADTATKSGSTTKNRFVV</sequence>
<protein>
    <recommendedName>
        <fullName>Eukaryotic translation initiation factor 4E</fullName>
        <shortName>eIF-4E</shortName>
        <shortName>eIF4E</shortName>
    </recommendedName>
    <alternativeName>
        <fullName>eIF-4F 25 kDa subunit</fullName>
    </alternativeName>
    <alternativeName>
        <fullName>mRNA cap-binding protein</fullName>
    </alternativeName>
</protein>
<accession>P48597</accession>
<evidence type="ECO:0000250" key="1">
    <source>
        <dbReference type="UniProtKB" id="P06730"/>
    </source>
</evidence>
<evidence type="ECO:0000250" key="2">
    <source>
        <dbReference type="UniProtKB" id="P63073"/>
    </source>
</evidence>
<evidence type="ECO:0000256" key="3">
    <source>
        <dbReference type="SAM" id="MobiDB-lite"/>
    </source>
</evidence>
<evidence type="ECO:0000269" key="4">
    <source>
    </source>
</evidence>
<evidence type="ECO:0000269" key="5">
    <source>
    </source>
</evidence>
<evidence type="ECO:0000269" key="6">
    <source>
    </source>
</evidence>
<evidence type="ECO:0000305" key="7"/>
<organism>
    <name type="scientific">Xenopus laevis</name>
    <name type="common">African clawed frog</name>
    <dbReference type="NCBI Taxonomy" id="8355"/>
    <lineage>
        <taxon>Eukaryota</taxon>
        <taxon>Metazoa</taxon>
        <taxon>Chordata</taxon>
        <taxon>Craniata</taxon>
        <taxon>Vertebrata</taxon>
        <taxon>Euteleostomi</taxon>
        <taxon>Amphibia</taxon>
        <taxon>Batrachia</taxon>
        <taxon>Anura</taxon>
        <taxon>Pipoidea</taxon>
        <taxon>Pipidae</taxon>
        <taxon>Xenopodinae</taxon>
        <taxon>Xenopus</taxon>
        <taxon>Xenopus</taxon>
    </lineage>
</organism>
<reference key="1">
    <citation type="journal article" date="1995" name="FEBS Lett.">
        <title>mRNA encoding the translation initiation factor eIF-4E is expressed early in Xenopus embryogenesis.</title>
        <authorList>
            <person name="Wakiyama M."/>
            <person name="Saigoh M."/>
            <person name="Shiokawa K."/>
            <person name="Miura K.I."/>
        </authorList>
    </citation>
    <scope>NUCLEOTIDE SEQUENCE [MRNA]</scope>
    <scope>DEVELOPMENTAL STAGE</scope>
</reference>
<reference key="2">
    <citation type="journal article" date="1999" name="Mol. Cell">
        <title>Maskin is a CPEB-associated factor that transiently interacts with eIF-4E.</title>
        <authorList>
            <person name="Stebbins-Boaz B."/>
            <person name="Cao Q."/>
            <person name="de Moor C.H."/>
            <person name="Mendez R."/>
            <person name="Richter J.D."/>
        </authorList>
    </citation>
    <scope>FUNCTION</scope>
    <scope>INTERACTION WITH TACC3</scope>
    <scope>SUBCELLULAR LOCATION</scope>
    <scope>DEVELOPMENTAL STAGE</scope>
</reference>
<reference key="3">
    <citation type="journal article" date="2001" name="Eur. J. Biochem.">
        <title>Phosphorylation of eukaryotic initiation factor 4E (eIF4E) at Ser209 is not required for protein synthesis in vitro and in vivo.</title>
        <authorList>
            <person name="McKendrick L."/>
            <person name="Morley S.J."/>
            <person name="Pain V.M."/>
            <person name="Jagus R."/>
            <person name="Joshi B."/>
        </authorList>
    </citation>
    <scope>MUTAGENESIS OF SER-205</scope>
</reference>
<dbReference type="EMBL" id="D31837">
    <property type="protein sequence ID" value="BAA06623.1"/>
    <property type="molecule type" value="mRNA"/>
</dbReference>
<dbReference type="PIR" id="I51413">
    <property type="entry name" value="I51413"/>
</dbReference>
<dbReference type="RefSeq" id="XP_018090600.1">
    <property type="nucleotide sequence ID" value="XM_018235111.1"/>
</dbReference>
<dbReference type="SMR" id="P48597"/>
<dbReference type="DIP" id="DIP-29251N"/>
<dbReference type="IntAct" id="P48597">
    <property type="interactions" value="2"/>
</dbReference>
<dbReference type="MINT" id="P48597"/>
<dbReference type="DNASU" id="399255"/>
<dbReference type="GeneID" id="399255"/>
<dbReference type="AGR" id="Xenbase:XB-GENE-6254191"/>
<dbReference type="CTD" id="399255"/>
<dbReference type="Xenbase" id="XB-GENE-6254191">
    <property type="gene designation" value="eif4e1b.S"/>
</dbReference>
<dbReference type="OrthoDB" id="590761at2759"/>
<dbReference type="CD-CODE" id="78E86D56">
    <property type="entry name" value="Mitochondrial cloud"/>
</dbReference>
<dbReference type="Proteomes" id="UP000186698">
    <property type="component" value="Chromosome 1S"/>
</dbReference>
<dbReference type="Bgee" id="399255">
    <property type="expression patterns" value="Expressed in gastrula and 19 other cell types or tissues"/>
</dbReference>
<dbReference type="GO" id="GO:0005737">
    <property type="term" value="C:cytoplasm"/>
    <property type="evidence" value="ECO:0000250"/>
    <property type="project" value="UniProtKB"/>
</dbReference>
<dbReference type="GO" id="GO:0016281">
    <property type="term" value="C:eukaryotic translation initiation factor 4F complex"/>
    <property type="evidence" value="ECO:0000250"/>
    <property type="project" value="UniProtKB"/>
</dbReference>
<dbReference type="GO" id="GO:0016607">
    <property type="term" value="C:nuclear speck"/>
    <property type="evidence" value="ECO:0000250"/>
    <property type="project" value="UniProtKB"/>
</dbReference>
<dbReference type="GO" id="GO:0005634">
    <property type="term" value="C:nucleus"/>
    <property type="evidence" value="ECO:0000250"/>
    <property type="project" value="UniProtKB"/>
</dbReference>
<dbReference type="GO" id="GO:0000932">
    <property type="term" value="C:P-body"/>
    <property type="evidence" value="ECO:0000250"/>
    <property type="project" value="UniProtKB"/>
</dbReference>
<dbReference type="GO" id="GO:0032991">
    <property type="term" value="C:protein-containing complex"/>
    <property type="evidence" value="ECO:0000353"/>
    <property type="project" value="UniProtKB"/>
</dbReference>
<dbReference type="GO" id="GO:0000340">
    <property type="term" value="F:RNA 7-methylguanosine cap binding"/>
    <property type="evidence" value="ECO:0000318"/>
    <property type="project" value="GO_Central"/>
</dbReference>
<dbReference type="GO" id="GO:0003743">
    <property type="term" value="F:translation initiation factor activity"/>
    <property type="evidence" value="ECO:0000250"/>
    <property type="project" value="UniProtKB"/>
</dbReference>
<dbReference type="GO" id="GO:0006406">
    <property type="term" value="P:mRNA export from nucleus"/>
    <property type="evidence" value="ECO:0000250"/>
    <property type="project" value="UniProtKB"/>
</dbReference>
<dbReference type="GO" id="GO:0006417">
    <property type="term" value="P:regulation of translation"/>
    <property type="evidence" value="ECO:0000250"/>
    <property type="project" value="UniProtKB"/>
</dbReference>
<dbReference type="GO" id="GO:0006413">
    <property type="term" value="P:translational initiation"/>
    <property type="evidence" value="ECO:0000250"/>
    <property type="project" value="UniProtKB"/>
</dbReference>
<dbReference type="FunFam" id="3.30.760.10:FF:000002">
    <property type="entry name" value="Eukaryotic translation initiation factor 4E"/>
    <property type="match status" value="1"/>
</dbReference>
<dbReference type="Gene3D" id="3.30.760.10">
    <property type="entry name" value="RNA Cap, Translation Initiation Factor Eif4e"/>
    <property type="match status" value="1"/>
</dbReference>
<dbReference type="InterPro" id="IPR023398">
    <property type="entry name" value="TIF_eIF4e-like"/>
</dbReference>
<dbReference type="InterPro" id="IPR001040">
    <property type="entry name" value="TIF_eIF_4E"/>
</dbReference>
<dbReference type="InterPro" id="IPR019770">
    <property type="entry name" value="TIF_eIF_4E_CS"/>
</dbReference>
<dbReference type="PANTHER" id="PTHR11960:SF14">
    <property type="entry name" value="EUKARYOTIC TRANSLATION INITIATION FACTOR 4E"/>
    <property type="match status" value="1"/>
</dbReference>
<dbReference type="PANTHER" id="PTHR11960">
    <property type="entry name" value="EUKARYOTIC TRANSLATION INITIATION FACTOR 4E RELATED"/>
    <property type="match status" value="1"/>
</dbReference>
<dbReference type="Pfam" id="PF01652">
    <property type="entry name" value="IF4E"/>
    <property type="match status" value="1"/>
</dbReference>
<dbReference type="SUPFAM" id="SSF55418">
    <property type="entry name" value="eIF4e-like"/>
    <property type="match status" value="1"/>
</dbReference>
<dbReference type="PROSITE" id="PS00813">
    <property type="entry name" value="IF4E"/>
    <property type="match status" value="1"/>
</dbReference>
<keyword id="KW-0963">Cytoplasm</keyword>
<keyword id="KW-0396">Initiation factor</keyword>
<keyword id="KW-0509">mRNA transport</keyword>
<keyword id="KW-0539">Nucleus</keyword>
<keyword id="KW-0648">Protein biosynthesis</keyword>
<keyword id="KW-1185">Reference proteome</keyword>
<keyword id="KW-0694">RNA-binding</keyword>
<keyword id="KW-0810">Translation regulation</keyword>
<keyword id="KW-0813">Transport</keyword>
<gene>
    <name type="primary">eif4e</name>
</gene>
<proteinExistence type="evidence at protein level"/>